<name>RISB_PERMH</name>
<sequence>MTEINGNLSAEGLNFCIVVGRFNDLITNKLLEGAIDCIVRHGGSEDNITVVRVPGSFEIPLIAKKVAKTGKYDAVICLGAVIRGSTPHFEYVAAEVTKGIALVSLETEIPVSYGILTTDTIEQAVERAGTKMGNKGFDAALSAIEMANLIKEIR</sequence>
<comment type="function">
    <text evidence="1">Catalyzes the formation of 6,7-dimethyl-8-ribityllumazine by condensation of 5-amino-6-(D-ribitylamino)uracil with 3,4-dihydroxy-2-butanone 4-phosphate. This is the penultimate step in the biosynthesis of riboflavin.</text>
</comment>
<comment type="catalytic activity">
    <reaction evidence="1">
        <text>(2S)-2-hydroxy-3-oxobutyl phosphate + 5-amino-6-(D-ribitylamino)uracil = 6,7-dimethyl-8-(1-D-ribityl)lumazine + phosphate + 2 H2O + H(+)</text>
        <dbReference type="Rhea" id="RHEA:26152"/>
        <dbReference type="ChEBI" id="CHEBI:15377"/>
        <dbReference type="ChEBI" id="CHEBI:15378"/>
        <dbReference type="ChEBI" id="CHEBI:15934"/>
        <dbReference type="ChEBI" id="CHEBI:43474"/>
        <dbReference type="ChEBI" id="CHEBI:58201"/>
        <dbReference type="ChEBI" id="CHEBI:58830"/>
        <dbReference type="EC" id="2.5.1.78"/>
    </reaction>
</comment>
<comment type="pathway">
    <text evidence="1">Cofactor biosynthesis; riboflavin biosynthesis; riboflavin from 2-hydroxy-3-oxobutyl phosphate and 5-amino-6-(D-ribitylamino)uracil: step 1/2.</text>
</comment>
<comment type="subunit">
    <text evidence="1">Forms an icosahedral capsid composed of 60 subunits, arranged as a dodecamer of pentamers.</text>
</comment>
<comment type="similarity">
    <text evidence="1">Belongs to the DMRL synthase family.</text>
</comment>
<keyword id="KW-1185">Reference proteome</keyword>
<keyword id="KW-0686">Riboflavin biosynthesis</keyword>
<keyword id="KW-0808">Transferase</keyword>
<feature type="chain" id="PRO_1000195506" description="6,7-dimethyl-8-ribityllumazine synthase">
    <location>
        <begin position="1"/>
        <end position="154"/>
    </location>
</feature>
<feature type="active site" description="Proton donor" evidence="1">
    <location>
        <position position="88"/>
    </location>
</feature>
<feature type="binding site" evidence="1">
    <location>
        <position position="22"/>
    </location>
    <ligand>
        <name>5-amino-6-(D-ribitylamino)uracil</name>
        <dbReference type="ChEBI" id="CHEBI:15934"/>
    </ligand>
</feature>
<feature type="binding site" evidence="1">
    <location>
        <begin position="56"/>
        <end position="58"/>
    </location>
    <ligand>
        <name>5-amino-6-(D-ribitylamino)uracil</name>
        <dbReference type="ChEBI" id="CHEBI:15934"/>
    </ligand>
</feature>
<feature type="binding site" evidence="1">
    <location>
        <begin position="80"/>
        <end position="82"/>
    </location>
    <ligand>
        <name>5-amino-6-(D-ribitylamino)uracil</name>
        <dbReference type="ChEBI" id="CHEBI:15934"/>
    </ligand>
</feature>
<feature type="binding site" evidence="1">
    <location>
        <begin position="85"/>
        <end position="86"/>
    </location>
    <ligand>
        <name>(2S)-2-hydroxy-3-oxobutyl phosphate</name>
        <dbReference type="ChEBI" id="CHEBI:58830"/>
    </ligand>
</feature>
<feature type="binding site" evidence="1">
    <location>
        <position position="113"/>
    </location>
    <ligand>
        <name>5-amino-6-(D-ribitylamino)uracil</name>
        <dbReference type="ChEBI" id="CHEBI:15934"/>
    </ligand>
</feature>
<feature type="binding site" evidence="1">
    <location>
        <position position="127"/>
    </location>
    <ligand>
        <name>(2S)-2-hydroxy-3-oxobutyl phosphate</name>
        <dbReference type="ChEBI" id="CHEBI:58830"/>
    </ligand>
</feature>
<accession>C0QT44</accession>
<gene>
    <name evidence="1" type="primary">ribH</name>
    <name type="ordered locus">PERMA_0061</name>
</gene>
<protein>
    <recommendedName>
        <fullName evidence="1">6,7-dimethyl-8-ribityllumazine synthase</fullName>
        <shortName evidence="1">DMRL synthase</shortName>
        <shortName evidence="1">LS</shortName>
        <shortName evidence="1">Lumazine synthase</shortName>
        <ecNumber evidence="1">2.5.1.78</ecNumber>
    </recommendedName>
</protein>
<organism>
    <name type="scientific">Persephonella marina (strain DSM 14350 / EX-H1)</name>
    <dbReference type="NCBI Taxonomy" id="123214"/>
    <lineage>
        <taxon>Bacteria</taxon>
        <taxon>Pseudomonadati</taxon>
        <taxon>Aquificota</taxon>
        <taxon>Aquificia</taxon>
        <taxon>Aquificales</taxon>
        <taxon>Hydrogenothermaceae</taxon>
        <taxon>Persephonella</taxon>
    </lineage>
</organism>
<evidence type="ECO:0000255" key="1">
    <source>
        <dbReference type="HAMAP-Rule" id="MF_00178"/>
    </source>
</evidence>
<dbReference type="EC" id="2.5.1.78" evidence="1"/>
<dbReference type="EMBL" id="CP001230">
    <property type="protein sequence ID" value="ACO04162.1"/>
    <property type="molecule type" value="Genomic_DNA"/>
</dbReference>
<dbReference type="RefSeq" id="WP_012676400.1">
    <property type="nucleotide sequence ID" value="NC_012440.1"/>
</dbReference>
<dbReference type="SMR" id="C0QT44"/>
<dbReference type="STRING" id="123214.PERMA_0061"/>
<dbReference type="PaxDb" id="123214-PERMA_0061"/>
<dbReference type="KEGG" id="pmx:PERMA_0061"/>
<dbReference type="eggNOG" id="COG0054">
    <property type="taxonomic scope" value="Bacteria"/>
</dbReference>
<dbReference type="HOGENOM" id="CLU_089358_1_1_0"/>
<dbReference type="OrthoDB" id="9809709at2"/>
<dbReference type="UniPathway" id="UPA00275">
    <property type="reaction ID" value="UER00404"/>
</dbReference>
<dbReference type="Proteomes" id="UP000001366">
    <property type="component" value="Chromosome"/>
</dbReference>
<dbReference type="GO" id="GO:0005829">
    <property type="term" value="C:cytosol"/>
    <property type="evidence" value="ECO:0007669"/>
    <property type="project" value="TreeGrafter"/>
</dbReference>
<dbReference type="GO" id="GO:0009349">
    <property type="term" value="C:riboflavin synthase complex"/>
    <property type="evidence" value="ECO:0007669"/>
    <property type="project" value="InterPro"/>
</dbReference>
<dbReference type="GO" id="GO:0000906">
    <property type="term" value="F:6,7-dimethyl-8-ribityllumazine synthase activity"/>
    <property type="evidence" value="ECO:0007669"/>
    <property type="project" value="UniProtKB-UniRule"/>
</dbReference>
<dbReference type="GO" id="GO:0009231">
    <property type="term" value="P:riboflavin biosynthetic process"/>
    <property type="evidence" value="ECO:0007669"/>
    <property type="project" value="UniProtKB-UniRule"/>
</dbReference>
<dbReference type="CDD" id="cd09209">
    <property type="entry name" value="Lumazine_synthase-I"/>
    <property type="match status" value="1"/>
</dbReference>
<dbReference type="FunFam" id="3.40.50.960:FF:000001">
    <property type="entry name" value="6,7-dimethyl-8-ribityllumazine synthase"/>
    <property type="match status" value="1"/>
</dbReference>
<dbReference type="Gene3D" id="3.40.50.960">
    <property type="entry name" value="Lumazine/riboflavin synthase"/>
    <property type="match status" value="1"/>
</dbReference>
<dbReference type="HAMAP" id="MF_00178">
    <property type="entry name" value="Lumazine_synth"/>
    <property type="match status" value="1"/>
</dbReference>
<dbReference type="InterPro" id="IPR034964">
    <property type="entry name" value="LS"/>
</dbReference>
<dbReference type="InterPro" id="IPR002180">
    <property type="entry name" value="LS/RS"/>
</dbReference>
<dbReference type="InterPro" id="IPR036467">
    <property type="entry name" value="LS/RS_sf"/>
</dbReference>
<dbReference type="NCBIfam" id="TIGR00114">
    <property type="entry name" value="lumazine-synth"/>
    <property type="match status" value="1"/>
</dbReference>
<dbReference type="NCBIfam" id="NF000812">
    <property type="entry name" value="PRK00061.1-4"/>
    <property type="match status" value="1"/>
</dbReference>
<dbReference type="PANTHER" id="PTHR21058:SF0">
    <property type="entry name" value="6,7-DIMETHYL-8-RIBITYLLUMAZINE SYNTHASE"/>
    <property type="match status" value="1"/>
</dbReference>
<dbReference type="PANTHER" id="PTHR21058">
    <property type="entry name" value="6,7-DIMETHYL-8-RIBITYLLUMAZINE SYNTHASE DMRL SYNTHASE LUMAZINE SYNTHASE"/>
    <property type="match status" value="1"/>
</dbReference>
<dbReference type="Pfam" id="PF00885">
    <property type="entry name" value="DMRL_synthase"/>
    <property type="match status" value="1"/>
</dbReference>
<dbReference type="SUPFAM" id="SSF52121">
    <property type="entry name" value="Lumazine synthase"/>
    <property type="match status" value="1"/>
</dbReference>
<reference key="1">
    <citation type="journal article" date="2009" name="J. Bacteriol.">
        <title>Complete and draft genome sequences of six members of the Aquificales.</title>
        <authorList>
            <person name="Reysenbach A.-L."/>
            <person name="Hamamura N."/>
            <person name="Podar M."/>
            <person name="Griffiths E."/>
            <person name="Ferreira S."/>
            <person name="Hochstein R."/>
            <person name="Heidelberg J."/>
            <person name="Johnson J."/>
            <person name="Mead D."/>
            <person name="Pohorille A."/>
            <person name="Sarmiento M."/>
            <person name="Schweighofer K."/>
            <person name="Seshadri R."/>
            <person name="Voytek M.A."/>
        </authorList>
    </citation>
    <scope>NUCLEOTIDE SEQUENCE [LARGE SCALE GENOMIC DNA]</scope>
    <source>
        <strain>DSM 14350 / EX-H1</strain>
    </source>
</reference>
<proteinExistence type="inferred from homology"/>